<gene>
    <name evidence="1" type="primary">rplY</name>
    <name evidence="1" type="synonym">ctc</name>
    <name type="ordered locus">PputGB1_0765</name>
</gene>
<sequence length="197" mass="20998">MTDFILNAQARTDLGKGASRRLRHAASIPAVVYGGDKEAQSLTIVAKEIAKLFENEAAYSHVIELNVDGAKQNVVVKAMQRHPAKGFIMHADFVRVVAGQKLTAKVPVHFIGEEAPVKKGGEISHVVSEIEVSCEAKDLPEFIEVDLANAEVGTIIHLSDLKAPKGVEFVALAHGDDKAVANVHAPRVAPEAEGAAE</sequence>
<organism>
    <name type="scientific">Pseudomonas putida (strain GB-1)</name>
    <dbReference type="NCBI Taxonomy" id="76869"/>
    <lineage>
        <taxon>Bacteria</taxon>
        <taxon>Pseudomonadati</taxon>
        <taxon>Pseudomonadota</taxon>
        <taxon>Gammaproteobacteria</taxon>
        <taxon>Pseudomonadales</taxon>
        <taxon>Pseudomonadaceae</taxon>
        <taxon>Pseudomonas</taxon>
    </lineage>
</organism>
<name>RL25_PSEPG</name>
<evidence type="ECO:0000255" key="1">
    <source>
        <dbReference type="HAMAP-Rule" id="MF_01334"/>
    </source>
</evidence>
<evidence type="ECO:0000305" key="2"/>
<proteinExistence type="inferred from homology"/>
<comment type="function">
    <text evidence="1">This is one of the proteins that binds to the 5S RNA in the ribosome where it forms part of the central protuberance.</text>
</comment>
<comment type="subunit">
    <text evidence="1">Part of the 50S ribosomal subunit; part of the 5S rRNA/L5/L18/L25 subcomplex. Contacts the 5S rRNA. Binds to the 5S rRNA independently of L5 and L18.</text>
</comment>
<comment type="similarity">
    <text evidence="1">Belongs to the bacterial ribosomal protein bL25 family. CTC subfamily.</text>
</comment>
<dbReference type="EMBL" id="CP000926">
    <property type="protein sequence ID" value="ABY96675.1"/>
    <property type="molecule type" value="Genomic_DNA"/>
</dbReference>
<dbReference type="RefSeq" id="WP_012270477.1">
    <property type="nucleotide sequence ID" value="NC_010322.1"/>
</dbReference>
<dbReference type="SMR" id="B0KND5"/>
<dbReference type="KEGG" id="ppg:PputGB1_0765"/>
<dbReference type="eggNOG" id="COG1825">
    <property type="taxonomic scope" value="Bacteria"/>
</dbReference>
<dbReference type="HOGENOM" id="CLU_075939_0_1_6"/>
<dbReference type="Proteomes" id="UP000002157">
    <property type="component" value="Chromosome"/>
</dbReference>
<dbReference type="GO" id="GO:0022625">
    <property type="term" value="C:cytosolic large ribosomal subunit"/>
    <property type="evidence" value="ECO:0007669"/>
    <property type="project" value="TreeGrafter"/>
</dbReference>
<dbReference type="GO" id="GO:0008097">
    <property type="term" value="F:5S rRNA binding"/>
    <property type="evidence" value="ECO:0007669"/>
    <property type="project" value="InterPro"/>
</dbReference>
<dbReference type="GO" id="GO:0003735">
    <property type="term" value="F:structural constituent of ribosome"/>
    <property type="evidence" value="ECO:0007669"/>
    <property type="project" value="InterPro"/>
</dbReference>
<dbReference type="GO" id="GO:0006412">
    <property type="term" value="P:translation"/>
    <property type="evidence" value="ECO:0007669"/>
    <property type="project" value="UniProtKB-UniRule"/>
</dbReference>
<dbReference type="CDD" id="cd00495">
    <property type="entry name" value="Ribosomal_L25_TL5_CTC"/>
    <property type="match status" value="1"/>
</dbReference>
<dbReference type="Gene3D" id="2.170.120.20">
    <property type="entry name" value="Ribosomal protein L25, beta domain"/>
    <property type="match status" value="1"/>
</dbReference>
<dbReference type="Gene3D" id="2.40.240.10">
    <property type="entry name" value="Ribosomal Protein L25, Chain P"/>
    <property type="match status" value="1"/>
</dbReference>
<dbReference type="HAMAP" id="MF_01336">
    <property type="entry name" value="Ribosomal_bL25"/>
    <property type="match status" value="1"/>
</dbReference>
<dbReference type="HAMAP" id="MF_01334">
    <property type="entry name" value="Ribosomal_bL25_CTC"/>
    <property type="match status" value="1"/>
</dbReference>
<dbReference type="InterPro" id="IPR020056">
    <property type="entry name" value="Rbsml_bL25/Gln-tRNA_synth_N"/>
</dbReference>
<dbReference type="InterPro" id="IPR011035">
    <property type="entry name" value="Ribosomal_bL25/Gln-tRNA_synth"/>
</dbReference>
<dbReference type="InterPro" id="IPR020057">
    <property type="entry name" value="Ribosomal_bL25_b-dom"/>
</dbReference>
<dbReference type="InterPro" id="IPR037121">
    <property type="entry name" value="Ribosomal_bL25_C"/>
</dbReference>
<dbReference type="InterPro" id="IPR001021">
    <property type="entry name" value="Ribosomal_bL25_long"/>
</dbReference>
<dbReference type="InterPro" id="IPR020055">
    <property type="entry name" value="Ribosomal_bL25_short"/>
</dbReference>
<dbReference type="InterPro" id="IPR029751">
    <property type="entry name" value="Ribosomal_L25_dom"/>
</dbReference>
<dbReference type="InterPro" id="IPR020930">
    <property type="entry name" value="Ribosomal_uL5_bac-type"/>
</dbReference>
<dbReference type="NCBIfam" id="TIGR00731">
    <property type="entry name" value="bL25_bact_ctc"/>
    <property type="match status" value="1"/>
</dbReference>
<dbReference type="NCBIfam" id="NF004128">
    <property type="entry name" value="PRK05618.1-2"/>
    <property type="match status" value="1"/>
</dbReference>
<dbReference type="NCBIfam" id="NF004130">
    <property type="entry name" value="PRK05618.1-5"/>
    <property type="match status" value="1"/>
</dbReference>
<dbReference type="NCBIfam" id="NF004612">
    <property type="entry name" value="PRK05943.1"/>
    <property type="match status" value="1"/>
</dbReference>
<dbReference type="PANTHER" id="PTHR33284">
    <property type="entry name" value="RIBOSOMAL PROTEIN L25/GLN-TRNA SYNTHETASE, ANTI-CODON-BINDING DOMAIN-CONTAINING PROTEIN"/>
    <property type="match status" value="1"/>
</dbReference>
<dbReference type="PANTHER" id="PTHR33284:SF1">
    <property type="entry name" value="RIBOSOMAL PROTEIN L25_GLN-TRNA SYNTHETASE, ANTI-CODON-BINDING DOMAIN-CONTAINING PROTEIN"/>
    <property type="match status" value="1"/>
</dbReference>
<dbReference type="Pfam" id="PF01386">
    <property type="entry name" value="Ribosomal_L25p"/>
    <property type="match status" value="1"/>
</dbReference>
<dbReference type="Pfam" id="PF14693">
    <property type="entry name" value="Ribosomal_TL5_C"/>
    <property type="match status" value="1"/>
</dbReference>
<dbReference type="SUPFAM" id="SSF50715">
    <property type="entry name" value="Ribosomal protein L25-like"/>
    <property type="match status" value="1"/>
</dbReference>
<accession>B0KND5</accession>
<reference key="1">
    <citation type="submission" date="2008-01" db="EMBL/GenBank/DDBJ databases">
        <title>Complete sequence of Pseudomonas putida GB-1.</title>
        <authorList>
            <consortium name="US DOE Joint Genome Institute"/>
            <person name="Copeland A."/>
            <person name="Lucas S."/>
            <person name="Lapidus A."/>
            <person name="Barry K."/>
            <person name="Glavina del Rio T."/>
            <person name="Dalin E."/>
            <person name="Tice H."/>
            <person name="Pitluck S."/>
            <person name="Bruce D."/>
            <person name="Goodwin L."/>
            <person name="Chertkov O."/>
            <person name="Brettin T."/>
            <person name="Detter J.C."/>
            <person name="Han C."/>
            <person name="Kuske C.R."/>
            <person name="Schmutz J."/>
            <person name="Larimer F."/>
            <person name="Land M."/>
            <person name="Hauser L."/>
            <person name="Kyrpides N."/>
            <person name="Kim E."/>
            <person name="McCarthy J.K."/>
            <person name="Richardson P."/>
        </authorList>
    </citation>
    <scope>NUCLEOTIDE SEQUENCE [LARGE SCALE GENOMIC DNA]</scope>
    <source>
        <strain>GB-1</strain>
    </source>
</reference>
<keyword id="KW-0687">Ribonucleoprotein</keyword>
<keyword id="KW-0689">Ribosomal protein</keyword>
<keyword id="KW-0694">RNA-binding</keyword>
<keyword id="KW-0699">rRNA-binding</keyword>
<feature type="chain" id="PRO_1000086635" description="Large ribosomal subunit protein bL25">
    <location>
        <begin position="1"/>
        <end position="197"/>
    </location>
</feature>
<protein>
    <recommendedName>
        <fullName evidence="1">Large ribosomal subunit protein bL25</fullName>
    </recommendedName>
    <alternativeName>
        <fullName evidence="2">50S ribosomal protein L25</fullName>
    </alternativeName>
    <alternativeName>
        <fullName evidence="1">General stress protein CTC</fullName>
    </alternativeName>
</protein>